<proteinExistence type="evidence at protein level"/>
<gene>
    <name type="primary">cheAY</name>
    <name type="ordered locus">HP_0392</name>
</gene>
<keyword id="KW-0418">Kinase</keyword>
<keyword id="KW-0597">Phosphoprotein</keyword>
<keyword id="KW-1185">Reference proteome</keyword>
<keyword id="KW-0808">Transferase</keyword>
<comment type="function">
    <text evidence="1 7 8">Member of the two-component regulatory system CheAY/CheY that regulates chemotaxis and colonization of the gastric mucosa (PubMed:10722597). Functions as a sensor protein kinase which is autophosphorylated at a histidine residue and transfers its phosphate group to the conserved aspartic acid residue in the regulatory domain of CheY (PubMed:16207913). In turn, phosphorylated CheY (CheY-P) interacts with the flagellar motor protein FliM to cause clockwise flagellar rotation and bacterial reversals, as opposed to straight swimming when CheY is not phosphorylated (By similarity).</text>
</comment>
<comment type="catalytic activity">
    <reaction evidence="8">
        <text>ATP + protein L-histidine = ADP + protein N-phospho-L-histidine.</text>
        <dbReference type="EC" id="2.7.13.3"/>
    </reaction>
</comment>
<comment type="interaction">
    <interactant intactId="EBI-6410665">
        <id>O25153</id>
    </interactant>
    <interactant intactId="EBI-7496390">
        <id>O25152</id>
        <label>cheW</label>
    </interactant>
    <organismsDiffer>false</organismsDiffer>
    <experiments>3</experiments>
</comment>
<comment type="interaction">
    <interactant intactId="EBI-6410665">
        <id>O25153</id>
    </interactant>
    <interactant intactId="EBI-6409045">
        <id>P71403</id>
        <label>cheY1</label>
    </interactant>
    <organismsDiffer>false</organismsDiffer>
    <experiments>3</experiments>
</comment>
<comment type="domain">
    <text evidence="7">Contains a C-terminal CheY-like regulatory domain where the phosphate can be transferred.</text>
</comment>
<comment type="PTM">
    <text evidence="8">Autophosphorylated.</text>
</comment>
<comment type="disruption phenotype">
    <text evidence="8">Mutants are unable to colonize mice.</text>
</comment>
<evidence type="ECO:0000250" key="1">
    <source>
        <dbReference type="UniProtKB" id="P71403"/>
    </source>
</evidence>
<evidence type="ECO:0000255" key="2">
    <source>
        <dbReference type="PROSITE-ProRule" id="PRU00052"/>
    </source>
</evidence>
<evidence type="ECO:0000255" key="3">
    <source>
        <dbReference type="PROSITE-ProRule" id="PRU00107"/>
    </source>
</evidence>
<evidence type="ECO:0000255" key="4">
    <source>
        <dbReference type="PROSITE-ProRule" id="PRU00110"/>
    </source>
</evidence>
<evidence type="ECO:0000255" key="5">
    <source>
        <dbReference type="PROSITE-ProRule" id="PRU00169"/>
    </source>
</evidence>
<evidence type="ECO:0000256" key="6">
    <source>
        <dbReference type="SAM" id="MobiDB-lite"/>
    </source>
</evidence>
<evidence type="ECO:0000269" key="7">
    <source>
    </source>
</evidence>
<evidence type="ECO:0000269" key="8">
    <source>
    </source>
</evidence>
<sequence length="803" mass="89759">MDDLQEIMEDFLIEAFEMNEQLDQDLVELEHNPEDLDLLNRIFRVAHTIKGSSSFLNLNILTHLTHNMEDVLNRARKGEIKITPDIMDVVLRSIDLMKTLLVTIRDTGSDTNNGKENEIEEAVKQLQAITSQNLESAKERTTEAPQKENKEETKEEAKEENKENKAKAPTAENTSSDNPLADEPDLDYANMSAEEVEAEIERLLNKRQEADKERRAQKKQEAKPKQEVTPTKETPKAPKTETKAKAKADTEENKAPSIGVEQTVRVDVRRLDHLMNLIGELVLGKNRLIRIYSDVEERYDGEKFLEELNQVVSSISAVTTDLQLAVMKTRMQPVGKVFNKFPRMVRDLSRELGKSIELIIEGEETELDKSIVEEIGDPLIHIIRNSCDHGIEPLEERRKLNKPETGKVQLSAYNEGNHIVIKISDDGKGLDPVMLKEKAIEKGVISERDAEGMSDREAFNLIFKPGFSTAKVVSNVSGRGVGMDVVKTNIEKLNGIIEIDSEVGVGTTQKLKIPLTLAIIQALLVGVQEEYYAIPLSSVLETVRISQDEIYTVDGKSVLRLRDEVLSLVRLSDIFKVDAILESNSDVYVVIIGLADQKIGVIVDYLIGQEEVVIKSLGYYLKNTRGIAGATVRGDGKITLIVDVGAMMDMAKSIKVNITTLMNESENTKSKNSPSDYIVLAIDDSSTDRAIIRKCLKPLGITLLEATNGLEGLEMLKNGDKIPDAILVDIEMPKMDGYTFASEVRKYNKFKNLPLIAVTSRVTKTDRMRGVESGMTEYITKPYSGEYLTTVVKRSIKLEGDQS</sequence>
<dbReference type="EC" id="2.7.13.3" evidence="8"/>
<dbReference type="EMBL" id="AE000511">
    <property type="protein sequence ID" value="AAD07457.1"/>
    <property type="molecule type" value="Genomic_DNA"/>
</dbReference>
<dbReference type="PIR" id="H64568">
    <property type="entry name" value="H64568"/>
</dbReference>
<dbReference type="RefSeq" id="NP_207190.1">
    <property type="nucleotide sequence ID" value="NC_000915.1"/>
</dbReference>
<dbReference type="SMR" id="O25153"/>
<dbReference type="DIP" id="DIP-3162N"/>
<dbReference type="FunCoup" id="O25153">
    <property type="interactions" value="170"/>
</dbReference>
<dbReference type="IntAct" id="O25153">
    <property type="interactions" value="5"/>
</dbReference>
<dbReference type="MINT" id="O25153"/>
<dbReference type="STRING" id="85962.HP_0392"/>
<dbReference type="PaxDb" id="85962-C694_01990"/>
<dbReference type="EnsemblBacteria" id="AAD07457">
    <property type="protein sequence ID" value="AAD07457"/>
    <property type="gene ID" value="HP_0392"/>
</dbReference>
<dbReference type="KEGG" id="heo:C694_01990"/>
<dbReference type="KEGG" id="hpy:HP_0392"/>
<dbReference type="PATRIC" id="fig|85962.47.peg.416"/>
<dbReference type="eggNOG" id="COG0643">
    <property type="taxonomic scope" value="Bacteria"/>
</dbReference>
<dbReference type="eggNOG" id="COG0784">
    <property type="taxonomic scope" value="Bacteria"/>
</dbReference>
<dbReference type="eggNOG" id="COG2198">
    <property type="taxonomic scope" value="Bacteria"/>
</dbReference>
<dbReference type="InParanoid" id="O25153"/>
<dbReference type="OrthoDB" id="9803176at2"/>
<dbReference type="PhylomeDB" id="O25153"/>
<dbReference type="Proteomes" id="UP000000429">
    <property type="component" value="Chromosome"/>
</dbReference>
<dbReference type="GO" id="GO:0005737">
    <property type="term" value="C:cytoplasm"/>
    <property type="evidence" value="ECO:0007669"/>
    <property type="project" value="InterPro"/>
</dbReference>
<dbReference type="GO" id="GO:0000155">
    <property type="term" value="F:phosphorelay sensor kinase activity"/>
    <property type="evidence" value="ECO:0007669"/>
    <property type="project" value="InterPro"/>
</dbReference>
<dbReference type="GO" id="GO:0006935">
    <property type="term" value="P:chemotaxis"/>
    <property type="evidence" value="ECO:0007669"/>
    <property type="project" value="InterPro"/>
</dbReference>
<dbReference type="CDD" id="cd00731">
    <property type="entry name" value="CheA_reg"/>
    <property type="match status" value="1"/>
</dbReference>
<dbReference type="CDD" id="cd16916">
    <property type="entry name" value="HATPase_CheA-like"/>
    <property type="match status" value="1"/>
</dbReference>
<dbReference type="CDD" id="cd00088">
    <property type="entry name" value="HPT"/>
    <property type="match status" value="1"/>
</dbReference>
<dbReference type="FunFam" id="2.30.30.40:FF:000048">
    <property type="entry name" value="Chemotaxis protein CheA, putative"/>
    <property type="match status" value="1"/>
</dbReference>
<dbReference type="FunFam" id="3.30.565.10:FF:000016">
    <property type="entry name" value="Chemotaxis protein CheA, putative"/>
    <property type="match status" value="1"/>
</dbReference>
<dbReference type="FunFam" id="3.40.50.2300:FF:000400">
    <property type="entry name" value="Signal transduction histidine kinase"/>
    <property type="match status" value="1"/>
</dbReference>
<dbReference type="Gene3D" id="3.40.50.2300">
    <property type="match status" value="1"/>
</dbReference>
<dbReference type="Gene3D" id="1.10.287.560">
    <property type="entry name" value="Histidine kinase CheA-like, homodimeric domain"/>
    <property type="match status" value="1"/>
</dbReference>
<dbReference type="Gene3D" id="3.30.565.10">
    <property type="entry name" value="Histidine kinase-like ATPase, C-terminal domain"/>
    <property type="match status" value="1"/>
</dbReference>
<dbReference type="Gene3D" id="1.20.120.160">
    <property type="entry name" value="HPT domain"/>
    <property type="match status" value="1"/>
</dbReference>
<dbReference type="Gene3D" id="2.30.30.40">
    <property type="entry name" value="SH3 Domains"/>
    <property type="match status" value="1"/>
</dbReference>
<dbReference type="InterPro" id="IPR051315">
    <property type="entry name" value="Bact_Chemotaxis_CheA"/>
</dbReference>
<dbReference type="InterPro" id="IPR004105">
    <property type="entry name" value="CheA-like_dim"/>
</dbReference>
<dbReference type="InterPro" id="IPR037006">
    <property type="entry name" value="CheA-like_homodim_sf"/>
</dbReference>
<dbReference type="InterPro" id="IPR036061">
    <property type="entry name" value="CheW-like_dom_sf"/>
</dbReference>
<dbReference type="InterPro" id="IPR002545">
    <property type="entry name" value="CheW-lke_dom"/>
</dbReference>
<dbReference type="InterPro" id="IPR011006">
    <property type="entry name" value="CheY-like_superfamily"/>
</dbReference>
<dbReference type="InterPro" id="IPR036890">
    <property type="entry name" value="HATPase_C_sf"/>
</dbReference>
<dbReference type="InterPro" id="IPR005467">
    <property type="entry name" value="His_kinase_dom"/>
</dbReference>
<dbReference type="InterPro" id="IPR036097">
    <property type="entry name" value="HisK_dim/P_sf"/>
</dbReference>
<dbReference type="InterPro" id="IPR036641">
    <property type="entry name" value="HPT_dom_sf"/>
</dbReference>
<dbReference type="InterPro" id="IPR004358">
    <property type="entry name" value="Sig_transdc_His_kin-like_C"/>
</dbReference>
<dbReference type="InterPro" id="IPR008207">
    <property type="entry name" value="Sig_transdc_His_kin_Hpt_dom"/>
</dbReference>
<dbReference type="InterPro" id="IPR001789">
    <property type="entry name" value="Sig_transdc_resp-reg_receiver"/>
</dbReference>
<dbReference type="PANTHER" id="PTHR43395:SF1">
    <property type="entry name" value="CHEMOTAXIS PROTEIN CHEA"/>
    <property type="match status" value="1"/>
</dbReference>
<dbReference type="PANTHER" id="PTHR43395">
    <property type="entry name" value="SENSOR HISTIDINE KINASE CHEA"/>
    <property type="match status" value="1"/>
</dbReference>
<dbReference type="Pfam" id="PF01584">
    <property type="entry name" value="CheW"/>
    <property type="match status" value="1"/>
</dbReference>
<dbReference type="Pfam" id="PF02895">
    <property type="entry name" value="H-kinase_dim"/>
    <property type="match status" value="1"/>
</dbReference>
<dbReference type="Pfam" id="PF02518">
    <property type="entry name" value="HATPase_c"/>
    <property type="match status" value="1"/>
</dbReference>
<dbReference type="Pfam" id="PF01627">
    <property type="entry name" value="Hpt"/>
    <property type="match status" value="1"/>
</dbReference>
<dbReference type="Pfam" id="PF00072">
    <property type="entry name" value="Response_reg"/>
    <property type="match status" value="1"/>
</dbReference>
<dbReference type="PRINTS" id="PR00344">
    <property type="entry name" value="BCTRLSENSOR"/>
</dbReference>
<dbReference type="SMART" id="SM00260">
    <property type="entry name" value="CheW"/>
    <property type="match status" value="1"/>
</dbReference>
<dbReference type="SMART" id="SM01231">
    <property type="entry name" value="H-kinase_dim"/>
    <property type="match status" value="1"/>
</dbReference>
<dbReference type="SMART" id="SM00387">
    <property type="entry name" value="HATPase_c"/>
    <property type="match status" value="1"/>
</dbReference>
<dbReference type="SMART" id="SM00073">
    <property type="entry name" value="HPT"/>
    <property type="match status" value="1"/>
</dbReference>
<dbReference type="SMART" id="SM00448">
    <property type="entry name" value="REC"/>
    <property type="match status" value="1"/>
</dbReference>
<dbReference type="SUPFAM" id="SSF55874">
    <property type="entry name" value="ATPase domain of HSP90 chaperone/DNA topoisomerase II/histidine kinase"/>
    <property type="match status" value="1"/>
</dbReference>
<dbReference type="SUPFAM" id="SSF50341">
    <property type="entry name" value="CheW-like"/>
    <property type="match status" value="1"/>
</dbReference>
<dbReference type="SUPFAM" id="SSF52172">
    <property type="entry name" value="CheY-like"/>
    <property type="match status" value="1"/>
</dbReference>
<dbReference type="SUPFAM" id="SSF47226">
    <property type="entry name" value="Histidine-containing phosphotransfer domain, HPT domain"/>
    <property type="match status" value="1"/>
</dbReference>
<dbReference type="SUPFAM" id="SSF47384">
    <property type="entry name" value="Homodimeric domain of signal transducing histidine kinase"/>
    <property type="match status" value="1"/>
</dbReference>
<dbReference type="PROSITE" id="PS50851">
    <property type="entry name" value="CHEW"/>
    <property type="match status" value="1"/>
</dbReference>
<dbReference type="PROSITE" id="PS50109">
    <property type="entry name" value="HIS_KIN"/>
    <property type="match status" value="1"/>
</dbReference>
<dbReference type="PROSITE" id="PS50894">
    <property type="entry name" value="HPT"/>
    <property type="match status" value="1"/>
</dbReference>
<dbReference type="PROSITE" id="PS50110">
    <property type="entry name" value="RESPONSE_REGULATORY"/>
    <property type="match status" value="1"/>
</dbReference>
<protein>
    <recommendedName>
        <fullName>Sensor histidine kinase CheAY</fullName>
        <ecNumber evidence="8">2.7.13.3</ecNumber>
    </recommendedName>
</protein>
<organism>
    <name type="scientific">Helicobacter pylori (strain ATCC 700392 / 26695)</name>
    <name type="common">Campylobacter pylori</name>
    <dbReference type="NCBI Taxonomy" id="85962"/>
    <lineage>
        <taxon>Bacteria</taxon>
        <taxon>Pseudomonadati</taxon>
        <taxon>Campylobacterota</taxon>
        <taxon>Epsilonproteobacteria</taxon>
        <taxon>Campylobacterales</taxon>
        <taxon>Helicobacteraceae</taxon>
        <taxon>Helicobacter</taxon>
    </lineage>
</organism>
<accession>O25153</accession>
<name>CHEAY_HELPY</name>
<feature type="chain" id="PRO_0000448747" description="Sensor histidine kinase CheAY">
    <location>
        <begin position="1"/>
        <end position="803"/>
    </location>
</feature>
<feature type="domain" description="Histidine kinase" evidence="3">
    <location>
        <begin position="270"/>
        <end position="517"/>
    </location>
</feature>
<feature type="domain" description="CheW-like" evidence="2">
    <location>
        <begin position="519"/>
        <end position="653"/>
    </location>
</feature>
<feature type="domain" description="Response regulatory" evidence="5">
    <location>
        <begin position="678"/>
        <end position="796"/>
    </location>
</feature>
<feature type="region of interest" description="Disordered" evidence="6">
    <location>
        <begin position="134"/>
        <end position="185"/>
    </location>
</feature>
<feature type="region of interest" description="Disordered" evidence="6">
    <location>
        <begin position="209"/>
        <end position="255"/>
    </location>
</feature>
<feature type="compositionally biased region" description="Basic and acidic residues" evidence="6">
    <location>
        <begin position="136"/>
        <end position="166"/>
    </location>
</feature>
<feature type="compositionally biased region" description="Basic and acidic residues" evidence="6">
    <location>
        <begin position="209"/>
        <end position="226"/>
    </location>
</feature>
<feature type="compositionally biased region" description="Basic and acidic residues" evidence="6">
    <location>
        <begin position="233"/>
        <end position="254"/>
    </location>
</feature>
<feature type="modified residue" description="Phosphohistidine" evidence="4">
    <location>
        <position position="47"/>
    </location>
</feature>
<feature type="modified residue" description="Phosphohistidine; by autocatalysis" evidence="3">
    <location>
        <position position="273"/>
    </location>
</feature>
<feature type="modified residue" description="4-aspartylphosphate" evidence="5">
    <location>
        <position position="729"/>
    </location>
</feature>
<reference key="1">
    <citation type="journal article" date="1997" name="Nature">
        <title>The complete genome sequence of the gastric pathogen Helicobacter pylori.</title>
        <authorList>
            <person name="Tomb J.-F."/>
            <person name="White O."/>
            <person name="Kerlavage A.R."/>
            <person name="Clayton R.A."/>
            <person name="Sutton G.G."/>
            <person name="Fleischmann R.D."/>
            <person name="Ketchum K.A."/>
            <person name="Klenk H.-P."/>
            <person name="Gill S.R."/>
            <person name="Dougherty B.A."/>
            <person name="Nelson K.E."/>
            <person name="Quackenbush J."/>
            <person name="Zhou L."/>
            <person name="Kirkness E.F."/>
            <person name="Peterson S.N."/>
            <person name="Loftus B.J."/>
            <person name="Richardson D.L."/>
            <person name="Dodson R.J."/>
            <person name="Khalak H.G."/>
            <person name="Glodek A."/>
            <person name="McKenney K."/>
            <person name="FitzGerald L.M."/>
            <person name="Lee N."/>
            <person name="Adams M.D."/>
            <person name="Hickey E.K."/>
            <person name="Berg D.E."/>
            <person name="Gocayne J.D."/>
            <person name="Utterback T.R."/>
            <person name="Peterson J.D."/>
            <person name="Kelley J.M."/>
            <person name="Cotton M.D."/>
            <person name="Weidman J.F."/>
            <person name="Fujii C."/>
            <person name="Bowman C."/>
            <person name="Watthey L."/>
            <person name="Wallin E."/>
            <person name="Hayes W.S."/>
            <person name="Borodovsky M."/>
            <person name="Karp P.D."/>
            <person name="Smith H.O."/>
            <person name="Fraser C.M."/>
            <person name="Venter J.C."/>
        </authorList>
    </citation>
    <scope>NUCLEOTIDE SEQUENCE [LARGE SCALE GENOMIC DNA]</scope>
    <source>
        <strain>ATCC 700392 / 26695</strain>
    </source>
</reference>
<reference key="2">
    <citation type="journal article" date="2000" name="Infect. Immun.">
        <title>Helicobacter pylori possesses two CheY response regulators and a histidine kinase sensor, CheA, which are essential for chemotaxis and colonization of the gastric mucosa.</title>
        <authorList>
            <person name="Foynes S."/>
            <person name="Dorrell N."/>
            <person name="Ward S.J."/>
            <person name="Stabler R.A."/>
            <person name="McColm A.A."/>
            <person name="Rycroft A.N."/>
            <person name="Wren B.W."/>
        </authorList>
    </citation>
    <scope>FUNCTION</scope>
    <scope>DISRUPTION PHENOTYPE</scope>
    <scope>DOMAIN</scope>
</reference>
<reference key="3">
    <citation type="journal article" date="2005" name="Microbiology">
        <title>Phosphate flow in the chemotactic response system of Helicobacter pylori.</title>
        <authorList>
            <person name="Jimenez-Pearson M.A."/>
            <person name="Delany I."/>
            <person name="Scarlato V."/>
            <person name="Beier D."/>
        </authorList>
    </citation>
    <scope>FUNCTION</scope>
    <scope>CATALYTIC ACTIVITY</scope>
    <scope>AUTOPHOSPHORYLATION</scope>
</reference>